<proteinExistence type="inferred from homology"/>
<protein>
    <recommendedName>
        <fullName evidence="1">Small ribosomal subunit protein eS1</fullName>
    </recommendedName>
    <alternativeName>
        <fullName evidence="3">40S ribosomal protein S1</fullName>
    </alternativeName>
</protein>
<reference key="1">
    <citation type="journal article" date="2008" name="Genome Biol.">
        <title>The genome sequence of the model ascomycete fungus Podospora anserina.</title>
        <authorList>
            <person name="Espagne E."/>
            <person name="Lespinet O."/>
            <person name="Malagnac F."/>
            <person name="Da Silva C."/>
            <person name="Jaillon O."/>
            <person name="Porcel B.M."/>
            <person name="Couloux A."/>
            <person name="Aury J.-M."/>
            <person name="Segurens B."/>
            <person name="Poulain J."/>
            <person name="Anthouard V."/>
            <person name="Grossetete S."/>
            <person name="Khalili H."/>
            <person name="Coppin E."/>
            <person name="Dequard-Chablat M."/>
            <person name="Picard M."/>
            <person name="Contamine V."/>
            <person name="Arnaise S."/>
            <person name="Bourdais A."/>
            <person name="Berteaux-Lecellier V."/>
            <person name="Gautheret D."/>
            <person name="de Vries R.P."/>
            <person name="Battaglia E."/>
            <person name="Coutinho P.M."/>
            <person name="Danchin E.G.J."/>
            <person name="Henrissat B."/>
            <person name="El Khoury R."/>
            <person name="Sainsard-Chanet A."/>
            <person name="Boivin A."/>
            <person name="Pinan-Lucarre B."/>
            <person name="Sellem C.H."/>
            <person name="Debuchy R."/>
            <person name="Wincker P."/>
            <person name="Weissenbach J."/>
            <person name="Silar P."/>
        </authorList>
    </citation>
    <scope>NUCLEOTIDE SEQUENCE [LARGE SCALE GENOMIC DNA]</scope>
    <source>
        <strain>S / ATCC MYA-4624 / DSM 980 / FGSC 10383</strain>
    </source>
</reference>
<reference key="2">
    <citation type="journal article" date="2014" name="Genetics">
        <title>Maintaining two mating types: Structure of the mating type locus and its role in heterokaryosis in Podospora anserina.</title>
        <authorList>
            <person name="Grognet P."/>
            <person name="Bidard F."/>
            <person name="Kuchly C."/>
            <person name="Tong L.C.H."/>
            <person name="Coppin E."/>
            <person name="Benkhali J.A."/>
            <person name="Couloux A."/>
            <person name="Wincker P."/>
            <person name="Debuchy R."/>
            <person name="Silar P."/>
        </authorList>
    </citation>
    <scope>GENOME REANNOTATION</scope>
    <source>
        <strain>S / ATCC MYA-4624 / DSM 980 / FGSC 10383</strain>
    </source>
</reference>
<gene>
    <name evidence="1" type="primary">RPS1</name>
    <name type="ordered locus">Pa_2_5310</name>
    <name type="ORF">PODANS_2_5310</name>
</gene>
<feature type="initiator methionine" description="Removed" evidence="1">
    <location>
        <position position="1"/>
    </location>
</feature>
<feature type="chain" id="PRO_0000389401" description="Small ribosomal subunit protein eS1">
    <location>
        <begin position="2"/>
        <end position="256"/>
    </location>
</feature>
<feature type="region of interest" description="Disordered" evidence="2">
    <location>
        <begin position="1"/>
        <end position="20"/>
    </location>
</feature>
<feature type="compositionally biased region" description="Basic residues" evidence="2">
    <location>
        <begin position="1"/>
        <end position="18"/>
    </location>
</feature>
<feature type="modified residue" description="N-acetylalanine; partial" evidence="1">
    <location>
        <position position="2"/>
    </location>
</feature>
<sequence>MAVGKNKRLSKGKKGLKKKAQDPFARKDWYGIKAPAPFAIRDVGKTLVNRTTGLKNANDALKGRIVEVSLADLQKDEDHAFRKVKLRVDEVQGKNCLTNFHGLDFTSDKLRSLVRKWQTLIEANVTVQTTDHYLLRLFAIAFTKRRPNQIKKTTYAASSQIRAIRKKMTEIIQREASSCTLQQLTSKLIPEVIGREIEKATQGIYPLQNVHIRKVKLLKAPKFDLGALMALHGESSTDDAGQKVEREFKETVLESV</sequence>
<organism>
    <name type="scientific">Podospora anserina (strain S / ATCC MYA-4624 / DSM 980 / FGSC 10383)</name>
    <name type="common">Pleurage anserina</name>
    <dbReference type="NCBI Taxonomy" id="515849"/>
    <lineage>
        <taxon>Eukaryota</taxon>
        <taxon>Fungi</taxon>
        <taxon>Dikarya</taxon>
        <taxon>Ascomycota</taxon>
        <taxon>Pezizomycotina</taxon>
        <taxon>Sordariomycetes</taxon>
        <taxon>Sordariomycetidae</taxon>
        <taxon>Sordariales</taxon>
        <taxon>Podosporaceae</taxon>
        <taxon>Podospora</taxon>
        <taxon>Podospora anserina</taxon>
    </lineage>
</organism>
<comment type="subunit">
    <text evidence="1">Component of the small ribosomal subunit. Mature ribosomes consist of a small (40S) and a large (60S) subunit. The 40S subunit contains about 33 different proteins and 1 molecule of RNA (18S). The 60S subunit contains about 49 different proteins and 3 molecules of RNA (25S, 5.8S and 5S).</text>
</comment>
<comment type="subcellular location">
    <subcellularLocation>
        <location evidence="1">Cytoplasm</location>
    </subcellularLocation>
</comment>
<comment type="similarity">
    <text evidence="1">Belongs to the eukaryotic ribosomal protein eS1 family.</text>
</comment>
<comment type="sequence caution" evidence="3">
    <conflict type="erroneous gene model prediction">
        <sequence resource="EMBL-CDS" id="CAP73117"/>
    </conflict>
</comment>
<accession>B2B5P2</accession>
<accession>A0A090CIK8</accession>
<evidence type="ECO:0000255" key="1">
    <source>
        <dbReference type="HAMAP-Rule" id="MF_03122"/>
    </source>
</evidence>
<evidence type="ECO:0000256" key="2">
    <source>
        <dbReference type="SAM" id="MobiDB-lite"/>
    </source>
</evidence>
<evidence type="ECO:0000305" key="3"/>
<name>RS3A_PODAN</name>
<dbReference type="EMBL" id="CU640366">
    <property type="protein sequence ID" value="CAP73117.1"/>
    <property type="status" value="ALT_SEQ"/>
    <property type="molecule type" value="Genomic_DNA"/>
</dbReference>
<dbReference type="EMBL" id="FO904937">
    <property type="protein sequence ID" value="CDP25519.1"/>
    <property type="molecule type" value="Genomic_DNA"/>
</dbReference>
<dbReference type="RefSeq" id="XP_001911292.1">
    <property type="nucleotide sequence ID" value="XM_001911257.1"/>
</dbReference>
<dbReference type="SMR" id="B2B5P2"/>
<dbReference type="FunCoup" id="B2B5P2">
    <property type="interactions" value="1252"/>
</dbReference>
<dbReference type="STRING" id="515849.B2B5P2"/>
<dbReference type="GeneID" id="6196301"/>
<dbReference type="KEGG" id="pan:PODANSg8334"/>
<dbReference type="eggNOG" id="KOG1628">
    <property type="taxonomic scope" value="Eukaryota"/>
</dbReference>
<dbReference type="HOGENOM" id="CLU_062507_0_0_1"/>
<dbReference type="InParanoid" id="B2B5P2"/>
<dbReference type="OrthoDB" id="9834376at2759"/>
<dbReference type="Proteomes" id="UP000001197">
    <property type="component" value="Chromosome 2"/>
</dbReference>
<dbReference type="GO" id="GO:0022627">
    <property type="term" value="C:cytosolic small ribosomal subunit"/>
    <property type="evidence" value="ECO:0007669"/>
    <property type="project" value="UniProtKB-UniRule"/>
</dbReference>
<dbReference type="GO" id="GO:0003735">
    <property type="term" value="F:structural constituent of ribosome"/>
    <property type="evidence" value="ECO:0007669"/>
    <property type="project" value="UniProtKB-UniRule"/>
</dbReference>
<dbReference type="GO" id="GO:0006412">
    <property type="term" value="P:translation"/>
    <property type="evidence" value="ECO:0007669"/>
    <property type="project" value="UniProtKB-UniRule"/>
</dbReference>
<dbReference type="HAMAP" id="MF_03122">
    <property type="entry name" value="Ribosomal_eS1_euk"/>
    <property type="match status" value="1"/>
</dbReference>
<dbReference type="InterPro" id="IPR001593">
    <property type="entry name" value="Ribosomal_eS1"/>
</dbReference>
<dbReference type="InterPro" id="IPR018281">
    <property type="entry name" value="Ribosomal_eS1_CS"/>
</dbReference>
<dbReference type="InterPro" id="IPR027500">
    <property type="entry name" value="Ribosomal_eS1_euk"/>
</dbReference>
<dbReference type="PANTHER" id="PTHR11830">
    <property type="entry name" value="40S RIBOSOMAL PROTEIN S3A"/>
    <property type="match status" value="1"/>
</dbReference>
<dbReference type="Pfam" id="PF01015">
    <property type="entry name" value="Ribosomal_S3Ae"/>
    <property type="match status" value="1"/>
</dbReference>
<dbReference type="SMART" id="SM01397">
    <property type="entry name" value="Ribosomal_S3Ae"/>
    <property type="match status" value="1"/>
</dbReference>
<dbReference type="PROSITE" id="PS01191">
    <property type="entry name" value="RIBOSOMAL_S3AE"/>
    <property type="match status" value="1"/>
</dbReference>
<keyword id="KW-0007">Acetylation</keyword>
<keyword id="KW-0963">Cytoplasm</keyword>
<keyword id="KW-1185">Reference proteome</keyword>
<keyword id="KW-0687">Ribonucleoprotein</keyword>
<keyword id="KW-0689">Ribosomal protein</keyword>